<name>O2AG2_HUMAN</name>
<protein>
    <recommendedName>
        <fullName>Olfactory receptor 2AG2</fullName>
    </recommendedName>
</protein>
<reference key="1">
    <citation type="journal article" date="2006" name="Nature">
        <title>Human chromosome 11 DNA sequence and analysis including novel gene identification.</title>
        <authorList>
            <person name="Taylor T.D."/>
            <person name="Noguchi H."/>
            <person name="Totoki Y."/>
            <person name="Toyoda A."/>
            <person name="Kuroki Y."/>
            <person name="Dewar K."/>
            <person name="Lloyd C."/>
            <person name="Itoh T."/>
            <person name="Takeda T."/>
            <person name="Kim D.-W."/>
            <person name="She X."/>
            <person name="Barlow K.F."/>
            <person name="Bloom T."/>
            <person name="Bruford E."/>
            <person name="Chang J.L."/>
            <person name="Cuomo C.A."/>
            <person name="Eichler E."/>
            <person name="FitzGerald M.G."/>
            <person name="Jaffe D.B."/>
            <person name="LaButti K."/>
            <person name="Nicol R."/>
            <person name="Park H.-S."/>
            <person name="Seaman C."/>
            <person name="Sougnez C."/>
            <person name="Yang X."/>
            <person name="Zimmer A.R."/>
            <person name="Zody M.C."/>
            <person name="Birren B.W."/>
            <person name="Nusbaum C."/>
            <person name="Fujiyama A."/>
            <person name="Hattori M."/>
            <person name="Rogers J."/>
            <person name="Lander E.S."/>
            <person name="Sakaki Y."/>
        </authorList>
    </citation>
    <scope>NUCLEOTIDE SEQUENCE [LARGE SCALE GENOMIC DNA]</scope>
</reference>
<reference key="2">
    <citation type="journal article" date="2004" name="Genome Res.">
        <title>The status, quality, and expansion of the NIH full-length cDNA project: the Mammalian Gene Collection (MGC).</title>
        <authorList>
            <consortium name="The MGC Project Team"/>
        </authorList>
    </citation>
    <scope>NUCLEOTIDE SEQUENCE [LARGE SCALE MRNA]</scope>
    <scope>VARIANTS CYS-28 AND PRO-54</scope>
</reference>
<gene>
    <name type="primary">OR2AG2</name>
    <name type="synonym">OR2AG2P</name>
</gene>
<dbReference type="EMBL" id="AC091564">
    <property type="status" value="NOT_ANNOTATED_CDS"/>
    <property type="molecule type" value="Genomic_DNA"/>
</dbReference>
<dbReference type="EMBL" id="BC140734">
    <property type="protein sequence ID" value="AAI40735.1"/>
    <property type="molecule type" value="mRNA"/>
</dbReference>
<dbReference type="CCDS" id="CCDS31413.1"/>
<dbReference type="RefSeq" id="NP_001004490.1">
    <property type="nucleotide sequence ID" value="NM_001004490.2"/>
</dbReference>
<dbReference type="RefSeq" id="NP_001372982.1">
    <property type="nucleotide sequence ID" value="NM_001386053.1"/>
</dbReference>
<dbReference type="SMR" id="A6NM03"/>
<dbReference type="FunCoup" id="A6NM03">
    <property type="interactions" value="536"/>
</dbReference>
<dbReference type="STRING" id="9606.ENSP00000493362"/>
<dbReference type="GlyCosmos" id="A6NM03">
    <property type="glycosylation" value="2 sites, No reported glycans"/>
</dbReference>
<dbReference type="GlyGen" id="A6NM03">
    <property type="glycosylation" value="3 sites"/>
</dbReference>
<dbReference type="iPTMnet" id="A6NM03"/>
<dbReference type="PhosphoSitePlus" id="A6NM03"/>
<dbReference type="BioMuta" id="OR2AG2"/>
<dbReference type="MassIVE" id="A6NM03"/>
<dbReference type="PaxDb" id="9606-ENSP00000342697"/>
<dbReference type="PeptideAtlas" id="A6NM03"/>
<dbReference type="ProteomicsDB" id="1502"/>
<dbReference type="Antibodypedia" id="23952">
    <property type="antibodies" value="73 antibodies from 18 providers"/>
</dbReference>
<dbReference type="DNASU" id="338755"/>
<dbReference type="Ensembl" id="ENST00000641124.1">
    <property type="protein sequence ID" value="ENSP00000493362.1"/>
    <property type="gene ID" value="ENSG00000188124.4"/>
</dbReference>
<dbReference type="Ensembl" id="ENST00000641169.1">
    <property type="protein sequence ID" value="ENSP00000493311.1"/>
    <property type="gene ID" value="ENSG00000188124.4"/>
</dbReference>
<dbReference type="GeneID" id="338755"/>
<dbReference type="KEGG" id="hsa:338755"/>
<dbReference type="MANE-Select" id="ENST00000641124.1">
    <property type="protein sequence ID" value="ENSP00000493362.1"/>
    <property type="RefSeq nucleotide sequence ID" value="NM_001004490.2"/>
    <property type="RefSeq protein sequence ID" value="NP_001004490.1"/>
</dbReference>
<dbReference type="UCSC" id="uc001meq.2">
    <property type="organism name" value="human"/>
</dbReference>
<dbReference type="AGR" id="HGNC:15143"/>
<dbReference type="CTD" id="338755"/>
<dbReference type="DisGeNET" id="338755"/>
<dbReference type="GeneCards" id="OR2AG2"/>
<dbReference type="HGNC" id="HGNC:15143">
    <property type="gene designation" value="OR2AG2"/>
</dbReference>
<dbReference type="HPA" id="ENSG00000188124">
    <property type="expression patterns" value="Not detected"/>
</dbReference>
<dbReference type="neXtProt" id="NX_A6NM03"/>
<dbReference type="OpenTargets" id="ENSG00000188124"/>
<dbReference type="PharmGKB" id="PA32127"/>
<dbReference type="VEuPathDB" id="HostDB:ENSG00000188124"/>
<dbReference type="eggNOG" id="ENOG502SIEP">
    <property type="taxonomic scope" value="Eukaryota"/>
</dbReference>
<dbReference type="GeneTree" id="ENSGT01130000278264"/>
<dbReference type="HOGENOM" id="CLU_012526_1_0_1"/>
<dbReference type="InParanoid" id="A6NM03"/>
<dbReference type="OMA" id="CMSWEIR"/>
<dbReference type="OrthoDB" id="9482363at2759"/>
<dbReference type="PAN-GO" id="A6NM03">
    <property type="GO annotations" value="0 GO annotations based on evolutionary models"/>
</dbReference>
<dbReference type="PhylomeDB" id="A6NM03"/>
<dbReference type="TreeFam" id="TF337295"/>
<dbReference type="PathwayCommons" id="A6NM03"/>
<dbReference type="Reactome" id="R-HSA-9752946">
    <property type="pathway name" value="Expression and translocation of olfactory receptors"/>
</dbReference>
<dbReference type="BioGRID-ORCS" id="338755">
    <property type="hits" value="10 hits in 755 CRISPR screens"/>
</dbReference>
<dbReference type="ChiTaRS" id="OR2AG2">
    <property type="organism name" value="human"/>
</dbReference>
<dbReference type="GenomeRNAi" id="338755"/>
<dbReference type="Pharos" id="A6NM03">
    <property type="development level" value="Tdark"/>
</dbReference>
<dbReference type="PRO" id="PR:A6NM03"/>
<dbReference type="Proteomes" id="UP000005640">
    <property type="component" value="Chromosome 11"/>
</dbReference>
<dbReference type="RNAct" id="A6NM03">
    <property type="molecule type" value="protein"/>
</dbReference>
<dbReference type="Bgee" id="ENSG00000188124">
    <property type="expression patterns" value="Expressed in male germ line stem cell (sensu Vertebrata) in testis and 10 other cell types or tissues"/>
</dbReference>
<dbReference type="ExpressionAtlas" id="A6NM03">
    <property type="expression patterns" value="baseline and differential"/>
</dbReference>
<dbReference type="GO" id="GO:0005886">
    <property type="term" value="C:plasma membrane"/>
    <property type="evidence" value="ECO:0000318"/>
    <property type="project" value="GO_Central"/>
</dbReference>
<dbReference type="GO" id="GO:0004930">
    <property type="term" value="F:G protein-coupled receptor activity"/>
    <property type="evidence" value="ECO:0007669"/>
    <property type="project" value="UniProtKB-KW"/>
</dbReference>
<dbReference type="GO" id="GO:0004984">
    <property type="term" value="F:olfactory receptor activity"/>
    <property type="evidence" value="ECO:0000318"/>
    <property type="project" value="GO_Central"/>
</dbReference>
<dbReference type="GO" id="GO:0050911">
    <property type="term" value="P:detection of chemical stimulus involved in sensory perception of smell"/>
    <property type="evidence" value="ECO:0000318"/>
    <property type="project" value="GO_Central"/>
</dbReference>
<dbReference type="CDD" id="cd15421">
    <property type="entry name" value="7tmA_OR2T-like"/>
    <property type="match status" value="1"/>
</dbReference>
<dbReference type="FunFam" id="1.10.1220.70:FF:000001">
    <property type="entry name" value="Olfactory receptor"/>
    <property type="match status" value="1"/>
</dbReference>
<dbReference type="FunFam" id="1.20.1070.10:FF:000008">
    <property type="entry name" value="Olfactory receptor"/>
    <property type="match status" value="1"/>
</dbReference>
<dbReference type="Gene3D" id="1.20.1070.10">
    <property type="entry name" value="Rhodopsin 7-helix transmembrane proteins"/>
    <property type="match status" value="1"/>
</dbReference>
<dbReference type="InterPro" id="IPR000276">
    <property type="entry name" value="GPCR_Rhodpsn"/>
</dbReference>
<dbReference type="InterPro" id="IPR017452">
    <property type="entry name" value="GPCR_Rhodpsn_7TM"/>
</dbReference>
<dbReference type="InterPro" id="IPR000725">
    <property type="entry name" value="Olfact_rcpt"/>
</dbReference>
<dbReference type="PANTHER" id="PTHR26453">
    <property type="entry name" value="OLFACTORY RECEPTOR"/>
    <property type="match status" value="1"/>
</dbReference>
<dbReference type="Pfam" id="PF13853">
    <property type="entry name" value="7tm_4"/>
    <property type="match status" value="1"/>
</dbReference>
<dbReference type="PRINTS" id="PR00237">
    <property type="entry name" value="GPCRRHODOPSN"/>
</dbReference>
<dbReference type="PRINTS" id="PR00245">
    <property type="entry name" value="OLFACTORYR"/>
</dbReference>
<dbReference type="SUPFAM" id="SSF81321">
    <property type="entry name" value="Family A G protein-coupled receptor-like"/>
    <property type="match status" value="1"/>
</dbReference>
<dbReference type="PROSITE" id="PS50262">
    <property type="entry name" value="G_PROTEIN_RECEP_F1_2"/>
    <property type="match status" value="1"/>
</dbReference>
<comment type="function">
    <text evidence="4">Odorant receptor.</text>
</comment>
<comment type="subcellular location">
    <subcellularLocation>
        <location>Cell membrane</location>
        <topology>Multi-pass membrane protein</topology>
    </subcellularLocation>
</comment>
<comment type="similarity">
    <text evidence="2">Belongs to the G-protein coupled receptor 1 family.</text>
</comment>
<comment type="online information" name="Human Olfactory Receptor Data Exploratorium (HORDE)">
    <link uri="http://genome.weizmann.ac.il/horde/card/index/symbol:OR2AG2"/>
</comment>
<keyword id="KW-1003">Cell membrane</keyword>
<keyword id="KW-1015">Disulfide bond</keyword>
<keyword id="KW-0297">G-protein coupled receptor</keyword>
<keyword id="KW-0325">Glycoprotein</keyword>
<keyword id="KW-0472">Membrane</keyword>
<keyword id="KW-0552">Olfaction</keyword>
<keyword id="KW-0675">Receptor</keyword>
<keyword id="KW-1185">Reference proteome</keyword>
<keyword id="KW-0716">Sensory transduction</keyword>
<keyword id="KW-0807">Transducer</keyword>
<keyword id="KW-0812">Transmembrane</keyword>
<keyword id="KW-1133">Transmembrane helix</keyword>
<proteinExistence type="evidence at transcript level"/>
<feature type="chain" id="PRO_0000312343" description="Olfactory receptor 2AG2">
    <location>
        <begin position="1"/>
        <end position="316"/>
    </location>
</feature>
<feature type="topological domain" description="Extracellular" evidence="1">
    <location>
        <begin position="1"/>
        <end position="30"/>
    </location>
</feature>
<feature type="transmembrane region" description="Helical; Name=1" evidence="1">
    <location>
        <begin position="31"/>
        <end position="51"/>
    </location>
</feature>
<feature type="topological domain" description="Cytoplasmic" evidence="1">
    <location>
        <begin position="52"/>
        <end position="56"/>
    </location>
</feature>
<feature type="transmembrane region" description="Helical; Name=2" evidence="1">
    <location>
        <begin position="57"/>
        <end position="77"/>
    </location>
</feature>
<feature type="topological domain" description="Extracellular" evidence="1">
    <location>
        <begin position="78"/>
        <end position="97"/>
    </location>
</feature>
<feature type="transmembrane region" description="Helical; Name=3" evidence="1">
    <location>
        <begin position="98"/>
        <end position="118"/>
    </location>
</feature>
<feature type="topological domain" description="Cytoplasmic" evidence="1">
    <location>
        <begin position="119"/>
        <end position="139"/>
    </location>
</feature>
<feature type="transmembrane region" description="Helical; Name=4" evidence="1">
    <location>
        <begin position="140"/>
        <end position="160"/>
    </location>
</feature>
<feature type="topological domain" description="Extracellular" evidence="1">
    <location>
        <begin position="161"/>
        <end position="205"/>
    </location>
</feature>
<feature type="transmembrane region" description="Helical; Name=5" evidence="1">
    <location>
        <begin position="206"/>
        <end position="226"/>
    </location>
</feature>
<feature type="topological domain" description="Cytoplasmic" evidence="1">
    <location>
        <begin position="227"/>
        <end position="244"/>
    </location>
</feature>
<feature type="transmembrane region" description="Helical; Name=6" evidence="1">
    <location>
        <begin position="245"/>
        <end position="265"/>
    </location>
</feature>
<feature type="topological domain" description="Extracellular" evidence="1">
    <location>
        <begin position="266"/>
        <end position="271"/>
    </location>
</feature>
<feature type="transmembrane region" description="Helical; Name=7" evidence="1">
    <location>
        <begin position="272"/>
        <end position="292"/>
    </location>
</feature>
<feature type="topological domain" description="Cytoplasmic" evidence="1">
    <location>
        <begin position="293"/>
        <end position="316"/>
    </location>
</feature>
<feature type="glycosylation site" description="N-linked (GlcNAc...) asparagine" evidence="1">
    <location>
        <position position="5"/>
    </location>
</feature>
<feature type="glycosylation site" description="N-linked (GlcNAc...) asparagine" evidence="1">
    <location>
        <position position="19"/>
    </location>
</feature>
<feature type="disulfide bond" evidence="2">
    <location>
        <begin position="97"/>
        <end position="179"/>
    </location>
</feature>
<feature type="sequence variant" id="VAR_037497" description="In dbSNP:rs7102536." evidence="3">
    <original>Y</original>
    <variation>C</variation>
    <location>
        <position position="28"/>
    </location>
</feature>
<feature type="sequence variant" id="VAR_037498" description="In dbSNP:rs10839616." evidence="3">
    <original>R</original>
    <variation>P</variation>
    <location>
        <position position="54"/>
    </location>
</feature>
<feature type="sequence variant" id="VAR_037499" description="In dbSNP:rs11828782.">
    <original>R</original>
    <variation>L</variation>
    <location>
        <position position="87"/>
    </location>
</feature>
<feature type="sequence variant" id="VAR_037500" description="In dbSNP:rs7924459.">
    <original>R</original>
    <variation>G</variation>
    <location>
        <position position="299"/>
    </location>
</feature>
<organism>
    <name type="scientific">Homo sapiens</name>
    <name type="common">Human</name>
    <dbReference type="NCBI Taxonomy" id="9606"/>
    <lineage>
        <taxon>Eukaryota</taxon>
        <taxon>Metazoa</taxon>
        <taxon>Chordata</taxon>
        <taxon>Craniata</taxon>
        <taxon>Vertebrata</taxon>
        <taxon>Euteleostomi</taxon>
        <taxon>Mammalia</taxon>
        <taxon>Eutheria</taxon>
        <taxon>Euarchontoglires</taxon>
        <taxon>Primates</taxon>
        <taxon>Haplorrhini</taxon>
        <taxon>Catarrhini</taxon>
        <taxon>Hominidae</taxon>
        <taxon>Homo</taxon>
    </lineage>
</organism>
<accession>A6NM03</accession>
<accession>B9EIM0</accession>
<sequence>MELRNSTLGSGFILVGILNDSGSPELLYATFTILYMLALTSNGLLLLAITIEARLHMPMYLLLGQLSLMDLLFTSVVTPKALADFLRRENTISFGGCALQMFLALTMGSAEDLLLAFMAYDRYVAICHPLKYMTLMSPRVCWIMVATSWILASLIAIGHTMYTMHLPFCVSWEIRHLLCEIPPLLKLACADTSRYELIIYVTGVTFLLLPISAIVASYTLVLFTVLRMPSNEGRKKALVTCSSHLIVVGMFYGAATFMYVLPSSFHSPKQDNIISVFYTIVTPALNPLIYSLRNKEVMRALRRVLGKYILLAHSTL</sequence>
<evidence type="ECO:0000255" key="1"/>
<evidence type="ECO:0000255" key="2">
    <source>
        <dbReference type="PROSITE-ProRule" id="PRU00521"/>
    </source>
</evidence>
<evidence type="ECO:0000269" key="3">
    <source>
    </source>
</evidence>
<evidence type="ECO:0000305" key="4"/>